<gene>
    <name evidence="1" type="primary">ybeY</name>
    <name type="ordered locus">CGSHiEE_03300</name>
</gene>
<feature type="chain" id="PRO_1000000723" description="Endoribonuclease YbeY">
    <location>
        <begin position="1"/>
        <end position="154"/>
    </location>
</feature>
<feature type="binding site" evidence="1">
    <location>
        <position position="114"/>
    </location>
    <ligand>
        <name>Zn(2+)</name>
        <dbReference type="ChEBI" id="CHEBI:29105"/>
        <note>catalytic</note>
    </ligand>
</feature>
<feature type="binding site" evidence="1">
    <location>
        <position position="118"/>
    </location>
    <ligand>
        <name>Zn(2+)</name>
        <dbReference type="ChEBI" id="CHEBI:29105"/>
        <note>catalytic</note>
    </ligand>
</feature>
<feature type="binding site" evidence="1">
    <location>
        <position position="124"/>
    </location>
    <ligand>
        <name>Zn(2+)</name>
        <dbReference type="ChEBI" id="CHEBI:29105"/>
        <note>catalytic</note>
    </ligand>
</feature>
<comment type="function">
    <text evidence="1">Single strand-specific metallo-endoribonuclease involved in late-stage 70S ribosome quality control and in maturation of the 3' terminus of the 16S rRNA.</text>
</comment>
<comment type="cofactor">
    <cofactor evidence="1">
        <name>Zn(2+)</name>
        <dbReference type="ChEBI" id="CHEBI:29105"/>
    </cofactor>
    <text evidence="1">Binds 1 zinc ion.</text>
</comment>
<comment type="subcellular location">
    <subcellularLocation>
        <location evidence="1">Cytoplasm</location>
    </subcellularLocation>
</comment>
<comment type="similarity">
    <text evidence="1">Belongs to the endoribonuclease YbeY family.</text>
</comment>
<protein>
    <recommendedName>
        <fullName evidence="1">Endoribonuclease YbeY</fullName>
        <ecNumber evidence="1">3.1.-.-</ecNumber>
    </recommendedName>
</protein>
<name>YBEY_HAEIE</name>
<proteinExistence type="inferred from homology"/>
<organism>
    <name type="scientific">Haemophilus influenzae (strain PittEE)</name>
    <dbReference type="NCBI Taxonomy" id="374930"/>
    <lineage>
        <taxon>Bacteria</taxon>
        <taxon>Pseudomonadati</taxon>
        <taxon>Pseudomonadota</taxon>
        <taxon>Gammaproteobacteria</taxon>
        <taxon>Pasteurellales</taxon>
        <taxon>Pasteurellaceae</taxon>
        <taxon>Haemophilus</taxon>
    </lineage>
</organism>
<reference key="1">
    <citation type="journal article" date="2007" name="Genome Biol.">
        <title>Characterization and modeling of the Haemophilus influenzae core and supragenomes based on the complete genomic sequences of Rd and 12 clinical nontypeable strains.</title>
        <authorList>
            <person name="Hogg J.S."/>
            <person name="Hu F.Z."/>
            <person name="Janto B."/>
            <person name="Boissy R."/>
            <person name="Hayes J."/>
            <person name="Keefe R."/>
            <person name="Post J.C."/>
            <person name="Ehrlich G.D."/>
        </authorList>
    </citation>
    <scope>NUCLEOTIDE SEQUENCE [LARGE SCALE GENOMIC DNA]</scope>
    <source>
        <strain>PittEE</strain>
    </source>
</reference>
<accession>A5UBD4</accession>
<evidence type="ECO:0000255" key="1">
    <source>
        <dbReference type="HAMAP-Rule" id="MF_00009"/>
    </source>
</evidence>
<sequence>MGSVLVDLQIATENIEGLPTEEQIVQWATAAIQPEGNEVEMTVRIVDEAESHELNLTYRGKDRPTNVLSFPFECPDEVELPLLGDLVICRQVVEREAAEQEKPLMAHWAHMVVHGGLHLLGYDHIEDDEAEEMESLETQIMQGLGFDDPYLAEK</sequence>
<keyword id="KW-0963">Cytoplasm</keyword>
<keyword id="KW-0255">Endonuclease</keyword>
<keyword id="KW-0378">Hydrolase</keyword>
<keyword id="KW-0479">Metal-binding</keyword>
<keyword id="KW-0540">Nuclease</keyword>
<keyword id="KW-0690">Ribosome biogenesis</keyword>
<keyword id="KW-0698">rRNA processing</keyword>
<keyword id="KW-0862">Zinc</keyword>
<dbReference type="EC" id="3.1.-.-" evidence="1"/>
<dbReference type="EMBL" id="CP000671">
    <property type="protein sequence ID" value="ABQ98085.1"/>
    <property type="molecule type" value="Genomic_DNA"/>
</dbReference>
<dbReference type="BMRB" id="A5UBD4"/>
<dbReference type="SMR" id="A5UBD4"/>
<dbReference type="KEGG" id="hip:CGSHiEE_03300"/>
<dbReference type="HOGENOM" id="CLU_106710_0_1_6"/>
<dbReference type="GO" id="GO:0005737">
    <property type="term" value="C:cytoplasm"/>
    <property type="evidence" value="ECO:0007669"/>
    <property type="project" value="UniProtKB-SubCell"/>
</dbReference>
<dbReference type="GO" id="GO:0004222">
    <property type="term" value="F:metalloendopeptidase activity"/>
    <property type="evidence" value="ECO:0007669"/>
    <property type="project" value="InterPro"/>
</dbReference>
<dbReference type="GO" id="GO:0004521">
    <property type="term" value="F:RNA endonuclease activity"/>
    <property type="evidence" value="ECO:0007669"/>
    <property type="project" value="UniProtKB-UniRule"/>
</dbReference>
<dbReference type="GO" id="GO:0008270">
    <property type="term" value="F:zinc ion binding"/>
    <property type="evidence" value="ECO:0007669"/>
    <property type="project" value="UniProtKB-UniRule"/>
</dbReference>
<dbReference type="GO" id="GO:0006364">
    <property type="term" value="P:rRNA processing"/>
    <property type="evidence" value="ECO:0007669"/>
    <property type="project" value="UniProtKB-UniRule"/>
</dbReference>
<dbReference type="Gene3D" id="3.40.390.30">
    <property type="entry name" value="Metalloproteases ('zincins'), catalytic domain"/>
    <property type="match status" value="1"/>
</dbReference>
<dbReference type="HAMAP" id="MF_00009">
    <property type="entry name" value="Endoribonucl_YbeY"/>
    <property type="match status" value="1"/>
</dbReference>
<dbReference type="InterPro" id="IPR023091">
    <property type="entry name" value="MetalPrtase_cat_dom_sf_prd"/>
</dbReference>
<dbReference type="InterPro" id="IPR002036">
    <property type="entry name" value="YbeY"/>
</dbReference>
<dbReference type="InterPro" id="IPR020549">
    <property type="entry name" value="YbeY_CS"/>
</dbReference>
<dbReference type="NCBIfam" id="TIGR00043">
    <property type="entry name" value="rRNA maturation RNase YbeY"/>
    <property type="match status" value="1"/>
</dbReference>
<dbReference type="PANTHER" id="PTHR46986">
    <property type="entry name" value="ENDORIBONUCLEASE YBEY, CHLOROPLASTIC"/>
    <property type="match status" value="1"/>
</dbReference>
<dbReference type="PANTHER" id="PTHR46986:SF1">
    <property type="entry name" value="ENDORIBONUCLEASE YBEY, CHLOROPLASTIC"/>
    <property type="match status" value="1"/>
</dbReference>
<dbReference type="Pfam" id="PF02130">
    <property type="entry name" value="YbeY"/>
    <property type="match status" value="1"/>
</dbReference>
<dbReference type="SUPFAM" id="SSF55486">
    <property type="entry name" value="Metalloproteases ('zincins'), catalytic domain"/>
    <property type="match status" value="1"/>
</dbReference>
<dbReference type="PROSITE" id="PS01306">
    <property type="entry name" value="UPF0054"/>
    <property type="match status" value="1"/>
</dbReference>